<comment type="function">
    <text evidence="1">Component of the BLOC-1 complex, a complex that is required for normal biogenesis of lysosome-related organelles (LRO). May play a role in intracellular vesicle trafficking (By similarity).</text>
</comment>
<comment type="subunit">
    <text evidence="1">Component of the biogenesis of lysosome-related organelles complex 1 (BLOC-1).</text>
</comment>
<comment type="similarity">
    <text evidence="3">Belongs to the BLOC1S5 family.</text>
</comment>
<proteinExistence type="inferred from homology"/>
<sequence length="164" mass="19652">MAGEKMVRDISGVYARLFDHRAVLQAECKYMLREFEGKRNDRELERLRESEQKIRQVQEEIPKCITESVKLKDLLEELKVAREKCHEILVKEEQDLFKERREEIFIESKKNWETFIGEIAEEEKRIEEEFEQSAEKLRARYGVQLVRNPKEPDDKGELQPQEIA</sequence>
<gene>
    <name type="primary">bloc1s5</name>
    <name type="synonym">muted</name>
    <name type="ORF">v1g246561</name>
</gene>
<dbReference type="EMBL" id="DS469732">
    <property type="protein sequence ID" value="EDO34439.1"/>
    <property type="molecule type" value="Genomic_DNA"/>
</dbReference>
<dbReference type="RefSeq" id="XP_001626539.1">
    <property type="nucleotide sequence ID" value="XM_001626489.1"/>
</dbReference>
<dbReference type="SMR" id="A7SPE8"/>
<dbReference type="FunCoup" id="A7SPE8">
    <property type="interactions" value="332"/>
</dbReference>
<dbReference type="STRING" id="45351.A7SPE8"/>
<dbReference type="EnsemblMetazoa" id="EDO34439">
    <property type="protein sequence ID" value="EDO34439"/>
    <property type="gene ID" value="NEMVEDRAFT_v1g246561"/>
</dbReference>
<dbReference type="GeneID" id="5505759"/>
<dbReference type="KEGG" id="nve:5505759"/>
<dbReference type="eggNOG" id="ENOG502SGGQ">
    <property type="taxonomic scope" value="Eukaryota"/>
</dbReference>
<dbReference type="HOGENOM" id="CLU_110751_1_0_1"/>
<dbReference type="InParanoid" id="A7SPE8"/>
<dbReference type="OMA" id="TNLQHGY"/>
<dbReference type="OrthoDB" id="18964at2759"/>
<dbReference type="PhylomeDB" id="A7SPE8"/>
<dbReference type="Proteomes" id="UP000001593">
    <property type="component" value="Unassembled WGS sequence"/>
</dbReference>
<dbReference type="GO" id="GO:0031083">
    <property type="term" value="C:BLOC-1 complex"/>
    <property type="evidence" value="ECO:0000318"/>
    <property type="project" value="GO_Central"/>
</dbReference>
<dbReference type="GO" id="GO:0030133">
    <property type="term" value="C:transport vesicle"/>
    <property type="evidence" value="ECO:0007669"/>
    <property type="project" value="InterPro"/>
</dbReference>
<dbReference type="InterPro" id="IPR017243">
    <property type="entry name" value="Bloc1s5"/>
</dbReference>
<dbReference type="PANTHER" id="PTHR31784">
    <property type="entry name" value="BIOGENESIS OF LYSOSOME-RELATED ORGANELLES COMPLEX 1 SUBUNIT 5"/>
    <property type="match status" value="1"/>
</dbReference>
<dbReference type="PANTHER" id="PTHR31784:SF2">
    <property type="entry name" value="BIOGENESIS OF LYSOSOME-RELATED ORGANELLES COMPLEX 1 SUBUNIT 5"/>
    <property type="match status" value="1"/>
</dbReference>
<dbReference type="Pfam" id="PF14942">
    <property type="entry name" value="Muted"/>
    <property type="match status" value="1"/>
</dbReference>
<evidence type="ECO:0000250" key="1"/>
<evidence type="ECO:0000255" key="2"/>
<evidence type="ECO:0000305" key="3"/>
<keyword id="KW-0175">Coiled coil</keyword>
<keyword id="KW-1185">Reference proteome</keyword>
<feature type="chain" id="PRO_0000330839" description="Biogenesis of lysosome-related organelles complex 1 subunit 5">
    <location>
        <begin position="1"/>
        <end position="164"/>
    </location>
</feature>
<feature type="coiled-coil region" evidence="2">
    <location>
        <begin position="36"/>
        <end position="91"/>
    </location>
</feature>
<protein>
    <recommendedName>
        <fullName>Biogenesis of lysosome-related organelles complex 1 subunit 5</fullName>
        <shortName>BLOC-1 subunit 5</shortName>
    </recommendedName>
    <alternativeName>
        <fullName>Protein Muted homolog</fullName>
    </alternativeName>
</protein>
<reference key="1">
    <citation type="journal article" date="2007" name="Science">
        <title>Sea anemone genome reveals ancestral eumetazoan gene repertoire and genomic organization.</title>
        <authorList>
            <person name="Putnam N.H."/>
            <person name="Srivastava M."/>
            <person name="Hellsten U."/>
            <person name="Dirks B."/>
            <person name="Chapman J."/>
            <person name="Salamov A."/>
            <person name="Terry A."/>
            <person name="Shapiro H."/>
            <person name="Lindquist E."/>
            <person name="Kapitonov V.V."/>
            <person name="Jurka J."/>
            <person name="Genikhovich G."/>
            <person name="Grigoriev I.V."/>
            <person name="Lucas S.M."/>
            <person name="Steele R.E."/>
            <person name="Finnerty J.R."/>
            <person name="Technau U."/>
            <person name="Martindale M.Q."/>
            <person name="Rokhsar D.S."/>
        </authorList>
    </citation>
    <scope>NUCLEOTIDE SEQUENCE [LARGE SCALE GENOMIC DNA]</scope>
    <source>
        <strain>CH2 X CH6</strain>
    </source>
</reference>
<organism>
    <name type="scientific">Nematostella vectensis</name>
    <name type="common">Starlet sea anemone</name>
    <dbReference type="NCBI Taxonomy" id="45351"/>
    <lineage>
        <taxon>Eukaryota</taxon>
        <taxon>Metazoa</taxon>
        <taxon>Cnidaria</taxon>
        <taxon>Anthozoa</taxon>
        <taxon>Hexacorallia</taxon>
        <taxon>Actiniaria</taxon>
        <taxon>Edwardsiidae</taxon>
        <taxon>Nematostella</taxon>
    </lineage>
</organism>
<name>BL1S5_NEMVE</name>
<accession>A7SPE8</accession>